<gene>
    <name evidence="1" type="primary">nuoH</name>
    <name type="ordered locus">Aflv_2696</name>
</gene>
<accession>B7GME7</accession>
<name>NUOH_ANOFW</name>
<keyword id="KW-1003">Cell membrane</keyword>
<keyword id="KW-0472">Membrane</keyword>
<keyword id="KW-0520">NAD</keyword>
<keyword id="KW-0874">Quinone</keyword>
<keyword id="KW-1278">Translocase</keyword>
<keyword id="KW-0812">Transmembrane</keyword>
<keyword id="KW-1133">Transmembrane helix</keyword>
<keyword id="KW-0830">Ubiquinone</keyword>
<feature type="chain" id="PRO_1000143570" description="NADH-quinone oxidoreductase subunit H">
    <location>
        <begin position="1"/>
        <end position="333"/>
    </location>
</feature>
<feature type="transmembrane region" description="Helical" evidence="1">
    <location>
        <begin position="17"/>
        <end position="37"/>
    </location>
</feature>
<feature type="transmembrane region" description="Helical" evidence="1">
    <location>
        <begin position="88"/>
        <end position="108"/>
    </location>
</feature>
<feature type="transmembrane region" description="Helical" evidence="1">
    <location>
        <begin position="117"/>
        <end position="137"/>
    </location>
</feature>
<feature type="transmembrane region" description="Helical" evidence="1">
    <location>
        <begin position="159"/>
        <end position="179"/>
    </location>
</feature>
<feature type="transmembrane region" description="Helical" evidence="1">
    <location>
        <begin position="191"/>
        <end position="211"/>
    </location>
</feature>
<feature type="transmembrane region" description="Helical" evidence="1">
    <location>
        <begin position="241"/>
        <end position="261"/>
    </location>
</feature>
<feature type="transmembrane region" description="Helical" evidence="1">
    <location>
        <begin position="273"/>
        <end position="293"/>
    </location>
</feature>
<feature type="transmembrane region" description="Helical" evidence="1">
    <location>
        <begin position="313"/>
        <end position="333"/>
    </location>
</feature>
<dbReference type="EC" id="7.1.1.-" evidence="1"/>
<dbReference type="EMBL" id="CP000922">
    <property type="protein sequence ID" value="ACJ35049.1"/>
    <property type="molecule type" value="Genomic_DNA"/>
</dbReference>
<dbReference type="RefSeq" id="WP_012576178.1">
    <property type="nucleotide sequence ID" value="NC_011567.1"/>
</dbReference>
<dbReference type="SMR" id="B7GME7"/>
<dbReference type="STRING" id="491915.Aflv_2696"/>
<dbReference type="GeneID" id="7038969"/>
<dbReference type="KEGG" id="afl:Aflv_2696"/>
<dbReference type="PATRIC" id="fig|491915.6.peg.2779"/>
<dbReference type="eggNOG" id="COG1005">
    <property type="taxonomic scope" value="Bacteria"/>
</dbReference>
<dbReference type="HOGENOM" id="CLU_015134_0_1_9"/>
<dbReference type="Proteomes" id="UP000000742">
    <property type="component" value="Chromosome"/>
</dbReference>
<dbReference type="GO" id="GO:0005886">
    <property type="term" value="C:plasma membrane"/>
    <property type="evidence" value="ECO:0007669"/>
    <property type="project" value="UniProtKB-SubCell"/>
</dbReference>
<dbReference type="GO" id="GO:0003954">
    <property type="term" value="F:NADH dehydrogenase activity"/>
    <property type="evidence" value="ECO:0007669"/>
    <property type="project" value="TreeGrafter"/>
</dbReference>
<dbReference type="GO" id="GO:0016655">
    <property type="term" value="F:oxidoreductase activity, acting on NAD(P)H, quinone or similar compound as acceptor"/>
    <property type="evidence" value="ECO:0007669"/>
    <property type="project" value="UniProtKB-UniRule"/>
</dbReference>
<dbReference type="GO" id="GO:0048038">
    <property type="term" value="F:quinone binding"/>
    <property type="evidence" value="ECO:0007669"/>
    <property type="project" value="UniProtKB-KW"/>
</dbReference>
<dbReference type="GO" id="GO:0009060">
    <property type="term" value="P:aerobic respiration"/>
    <property type="evidence" value="ECO:0007669"/>
    <property type="project" value="TreeGrafter"/>
</dbReference>
<dbReference type="HAMAP" id="MF_01350">
    <property type="entry name" value="NDH1_NuoH"/>
    <property type="match status" value="1"/>
</dbReference>
<dbReference type="InterPro" id="IPR001694">
    <property type="entry name" value="NADH_UbQ_OxRdtase_su1/FPO"/>
</dbReference>
<dbReference type="InterPro" id="IPR018086">
    <property type="entry name" value="NADH_UbQ_OxRdtase_su1_CS"/>
</dbReference>
<dbReference type="NCBIfam" id="NF004741">
    <property type="entry name" value="PRK06076.1-2"/>
    <property type="match status" value="1"/>
</dbReference>
<dbReference type="PANTHER" id="PTHR11432">
    <property type="entry name" value="NADH DEHYDROGENASE SUBUNIT 1"/>
    <property type="match status" value="1"/>
</dbReference>
<dbReference type="PANTHER" id="PTHR11432:SF3">
    <property type="entry name" value="NADH-UBIQUINONE OXIDOREDUCTASE CHAIN 1"/>
    <property type="match status" value="1"/>
</dbReference>
<dbReference type="Pfam" id="PF00146">
    <property type="entry name" value="NADHdh"/>
    <property type="match status" value="1"/>
</dbReference>
<dbReference type="PROSITE" id="PS00668">
    <property type="entry name" value="COMPLEX1_ND1_2"/>
    <property type="match status" value="1"/>
</dbReference>
<organism>
    <name type="scientific">Anoxybacillus flavithermus (strain DSM 21510 / WK1)</name>
    <dbReference type="NCBI Taxonomy" id="491915"/>
    <lineage>
        <taxon>Bacteria</taxon>
        <taxon>Bacillati</taxon>
        <taxon>Bacillota</taxon>
        <taxon>Bacilli</taxon>
        <taxon>Bacillales</taxon>
        <taxon>Anoxybacillaceae</taxon>
        <taxon>Anoxybacillus</taxon>
    </lineage>
</organism>
<comment type="function">
    <text evidence="1">NDH-1 shuttles electrons from NADH, via FMN and iron-sulfur (Fe-S) centers, to quinones in the respiratory chain. The immediate electron acceptor for the enzyme in this species is believed to be ubiquinone. Couples the redox reaction to proton translocation (for every two electrons transferred, four hydrogen ions are translocated across the cytoplasmic membrane), and thus conserves the redox energy in a proton gradient. This subunit may bind ubiquinone.</text>
</comment>
<comment type="catalytic activity">
    <reaction evidence="1">
        <text>a quinone + NADH + 5 H(+)(in) = a quinol + NAD(+) + 4 H(+)(out)</text>
        <dbReference type="Rhea" id="RHEA:57888"/>
        <dbReference type="ChEBI" id="CHEBI:15378"/>
        <dbReference type="ChEBI" id="CHEBI:24646"/>
        <dbReference type="ChEBI" id="CHEBI:57540"/>
        <dbReference type="ChEBI" id="CHEBI:57945"/>
        <dbReference type="ChEBI" id="CHEBI:132124"/>
    </reaction>
</comment>
<comment type="subunit">
    <text evidence="1">NDH-1 is composed of 14 different subunits. Subunits NuoA, H, J, K, L, M, N constitute the membrane sector of the complex.</text>
</comment>
<comment type="subcellular location">
    <subcellularLocation>
        <location evidence="1">Cell membrane</location>
        <topology evidence="1">Multi-pass membrane protein</topology>
    </subcellularLocation>
</comment>
<comment type="similarity">
    <text evidence="1">Belongs to the complex I subunit 1 family.</text>
</comment>
<reference key="1">
    <citation type="journal article" date="2008" name="Genome Biol.">
        <title>Encapsulated in silica: genome, proteome and physiology of the thermophilic bacterium Anoxybacillus flavithermus WK1.</title>
        <authorList>
            <person name="Saw J.H."/>
            <person name="Mountain B.W."/>
            <person name="Feng L."/>
            <person name="Omelchenko M.V."/>
            <person name="Hou S."/>
            <person name="Saito J.A."/>
            <person name="Stott M.B."/>
            <person name="Li D."/>
            <person name="Zhao G."/>
            <person name="Wu J."/>
            <person name="Galperin M.Y."/>
            <person name="Koonin E.V."/>
            <person name="Makarova K.S."/>
            <person name="Wolf Y.I."/>
            <person name="Rigden D.J."/>
            <person name="Dunfield P.F."/>
            <person name="Wang L."/>
            <person name="Alam M."/>
        </authorList>
    </citation>
    <scope>NUCLEOTIDE SEQUENCE [LARGE SCALE GENOMIC DNA]</scope>
    <source>
        <strain>DSM 21510 / WK1</strain>
    </source>
</reference>
<protein>
    <recommendedName>
        <fullName evidence="1">NADH-quinone oxidoreductase subunit H</fullName>
        <ecNumber evidence="1">7.1.1.-</ecNumber>
    </recommendedName>
    <alternativeName>
        <fullName evidence="1">NADH dehydrogenase I subunit H</fullName>
    </alternativeName>
    <alternativeName>
        <fullName evidence="1">NDH-1 subunit H</fullName>
    </alternativeName>
</protein>
<sequence length="333" mass="36664">MMEQLLQSTPSWTNVAIFFAIGVGLLLVVLGFVTYGILAERKVMGFMQGRIGPNQVGGRWGLLQTVADVLKLLLKEDTIPKAADRPLFILAPVIAFAPAFMVLAALPFTDALQFADIGVGLLYYIAVSGLTTIGVVTGAWASNNKYALLGGMRAAAQMISYEVPLVMSVIGVILLSGSLNLNDIVAAQKDVWFIVVQPIGFLVFLIAAVAELNRTPFDLPEAESELVAGFHVEYSGFRWAFFMLAEYVYFFAMAALTTVLFLGGWHPLPFLGFIPGAVWFALKFSLVVFLFIWFRITFPRVRADQLMEFGWKVLLPVALVNIFVTALVKQLFF</sequence>
<proteinExistence type="inferred from homology"/>
<evidence type="ECO:0000255" key="1">
    <source>
        <dbReference type="HAMAP-Rule" id="MF_01350"/>
    </source>
</evidence>